<sequence length="201" mass="22010">MELVMKDAPGALTVSETTFGRDFNEALVHQVVVAYAAGARQGTRAQKTRAEVTGSGKKPWRQKGTGRARAGSVKSPIWRSGGVTFAAKPQDHSQKVNKKMYRGALKSILSELVRQDRLIIVEKFSVEAPKTKLLAQKLKDMALEDVLIVTGELDENLFLAARNLYKVDVRDVAGIDPVSLIAFDKVVMTADAVKQVEEMLA</sequence>
<accession>A4TGZ3</accession>
<protein>
    <recommendedName>
        <fullName evidence="1">Large ribosomal subunit protein uL4</fullName>
    </recommendedName>
    <alternativeName>
        <fullName evidence="3">50S ribosomal protein L4</fullName>
    </alternativeName>
</protein>
<keyword id="KW-0687">Ribonucleoprotein</keyword>
<keyword id="KW-0689">Ribosomal protein</keyword>
<keyword id="KW-0694">RNA-binding</keyword>
<keyword id="KW-0699">rRNA-binding</keyword>
<evidence type="ECO:0000255" key="1">
    <source>
        <dbReference type="HAMAP-Rule" id="MF_01328"/>
    </source>
</evidence>
<evidence type="ECO:0000256" key="2">
    <source>
        <dbReference type="SAM" id="MobiDB-lite"/>
    </source>
</evidence>
<evidence type="ECO:0000305" key="3"/>
<organism>
    <name type="scientific">Yersinia pestis (strain Pestoides F)</name>
    <dbReference type="NCBI Taxonomy" id="386656"/>
    <lineage>
        <taxon>Bacteria</taxon>
        <taxon>Pseudomonadati</taxon>
        <taxon>Pseudomonadota</taxon>
        <taxon>Gammaproteobacteria</taxon>
        <taxon>Enterobacterales</taxon>
        <taxon>Yersiniaceae</taxon>
        <taxon>Yersinia</taxon>
    </lineage>
</organism>
<dbReference type="EMBL" id="CP000668">
    <property type="protein sequence ID" value="ABP38556.1"/>
    <property type="molecule type" value="Genomic_DNA"/>
</dbReference>
<dbReference type="RefSeq" id="WP_002218934.1">
    <property type="nucleotide sequence ID" value="NZ_CP009715.1"/>
</dbReference>
<dbReference type="SMR" id="A4TGZ3"/>
<dbReference type="GeneID" id="96663195"/>
<dbReference type="KEGG" id="ypp:YPDSF_0134"/>
<dbReference type="PATRIC" id="fig|386656.14.peg.433"/>
<dbReference type="GO" id="GO:1990904">
    <property type="term" value="C:ribonucleoprotein complex"/>
    <property type="evidence" value="ECO:0007669"/>
    <property type="project" value="UniProtKB-KW"/>
</dbReference>
<dbReference type="GO" id="GO:0005840">
    <property type="term" value="C:ribosome"/>
    <property type="evidence" value="ECO:0007669"/>
    <property type="project" value="UniProtKB-KW"/>
</dbReference>
<dbReference type="GO" id="GO:0019843">
    <property type="term" value="F:rRNA binding"/>
    <property type="evidence" value="ECO:0007669"/>
    <property type="project" value="UniProtKB-UniRule"/>
</dbReference>
<dbReference type="GO" id="GO:0003735">
    <property type="term" value="F:structural constituent of ribosome"/>
    <property type="evidence" value="ECO:0007669"/>
    <property type="project" value="InterPro"/>
</dbReference>
<dbReference type="GO" id="GO:0006412">
    <property type="term" value="P:translation"/>
    <property type="evidence" value="ECO:0007669"/>
    <property type="project" value="UniProtKB-UniRule"/>
</dbReference>
<dbReference type="FunFam" id="3.40.1370.10:FF:000001">
    <property type="entry name" value="50S ribosomal protein L4"/>
    <property type="match status" value="1"/>
</dbReference>
<dbReference type="Gene3D" id="3.40.1370.10">
    <property type="match status" value="1"/>
</dbReference>
<dbReference type="HAMAP" id="MF_01328_B">
    <property type="entry name" value="Ribosomal_uL4_B"/>
    <property type="match status" value="1"/>
</dbReference>
<dbReference type="InterPro" id="IPR002136">
    <property type="entry name" value="Ribosomal_uL4"/>
</dbReference>
<dbReference type="InterPro" id="IPR013005">
    <property type="entry name" value="Ribosomal_uL4-like"/>
</dbReference>
<dbReference type="InterPro" id="IPR023574">
    <property type="entry name" value="Ribosomal_uL4_dom_sf"/>
</dbReference>
<dbReference type="NCBIfam" id="TIGR03953">
    <property type="entry name" value="rplD_bact"/>
    <property type="match status" value="1"/>
</dbReference>
<dbReference type="PANTHER" id="PTHR10746">
    <property type="entry name" value="50S RIBOSOMAL PROTEIN L4"/>
    <property type="match status" value="1"/>
</dbReference>
<dbReference type="PANTHER" id="PTHR10746:SF6">
    <property type="entry name" value="LARGE RIBOSOMAL SUBUNIT PROTEIN UL4M"/>
    <property type="match status" value="1"/>
</dbReference>
<dbReference type="Pfam" id="PF00573">
    <property type="entry name" value="Ribosomal_L4"/>
    <property type="match status" value="1"/>
</dbReference>
<dbReference type="SUPFAM" id="SSF52166">
    <property type="entry name" value="Ribosomal protein L4"/>
    <property type="match status" value="1"/>
</dbReference>
<gene>
    <name evidence="1" type="primary">rplD</name>
    <name type="ordered locus">YPDSF_0134</name>
</gene>
<comment type="function">
    <text evidence="1">One of the primary rRNA binding proteins, this protein initially binds near the 5'-end of the 23S rRNA. It is important during the early stages of 50S assembly. It makes multiple contacts with different domains of the 23S rRNA in the assembled 50S subunit and ribosome.</text>
</comment>
<comment type="function">
    <text evidence="1">Forms part of the polypeptide exit tunnel.</text>
</comment>
<comment type="subunit">
    <text evidence="1">Part of the 50S ribosomal subunit.</text>
</comment>
<comment type="similarity">
    <text evidence="1">Belongs to the universal ribosomal protein uL4 family.</text>
</comment>
<reference key="1">
    <citation type="submission" date="2007-02" db="EMBL/GenBank/DDBJ databases">
        <title>Complete sequence of chromosome of Yersinia pestis Pestoides F.</title>
        <authorList>
            <consortium name="US DOE Joint Genome Institute"/>
            <person name="Copeland A."/>
            <person name="Lucas S."/>
            <person name="Lapidus A."/>
            <person name="Barry K."/>
            <person name="Detter J.C."/>
            <person name="Glavina del Rio T."/>
            <person name="Hammon N."/>
            <person name="Israni S."/>
            <person name="Dalin E."/>
            <person name="Tice H."/>
            <person name="Pitluck S."/>
            <person name="Di Bartolo G."/>
            <person name="Chain P."/>
            <person name="Malfatti S."/>
            <person name="Shin M."/>
            <person name="Vergez L."/>
            <person name="Schmutz J."/>
            <person name="Larimer F."/>
            <person name="Land M."/>
            <person name="Hauser L."/>
            <person name="Worsham P."/>
            <person name="Chu M."/>
            <person name="Bearden S."/>
            <person name="Garcia E."/>
            <person name="Richardson P."/>
        </authorList>
    </citation>
    <scope>NUCLEOTIDE SEQUENCE [LARGE SCALE GENOMIC DNA]</scope>
    <source>
        <strain>Pestoides F</strain>
    </source>
</reference>
<feature type="chain" id="PRO_1000052530" description="Large ribosomal subunit protein uL4">
    <location>
        <begin position="1"/>
        <end position="201"/>
    </location>
</feature>
<feature type="region of interest" description="Disordered" evidence="2">
    <location>
        <begin position="45"/>
        <end position="73"/>
    </location>
</feature>
<name>RL4_YERPP</name>
<proteinExistence type="inferred from homology"/>